<keyword id="KW-0067">ATP-binding</keyword>
<keyword id="KW-0963">Cytoplasm</keyword>
<keyword id="KW-0227">DNA damage</keyword>
<keyword id="KW-0233">DNA recombination</keyword>
<keyword id="KW-0234">DNA repair</keyword>
<keyword id="KW-0238">DNA-binding</keyword>
<keyword id="KW-0378">Hydrolase</keyword>
<keyword id="KW-0547">Nucleotide-binding</keyword>
<keyword id="KW-1185">Reference proteome</keyword>
<proteinExistence type="inferred from homology"/>
<dbReference type="EC" id="3.6.4.-" evidence="1"/>
<dbReference type="EMBL" id="AE017126">
    <property type="protein sequence ID" value="AAQ00819.1"/>
    <property type="molecule type" value="Genomic_DNA"/>
</dbReference>
<dbReference type="RefSeq" id="NP_876166.1">
    <property type="nucleotide sequence ID" value="NC_005042.1"/>
</dbReference>
<dbReference type="RefSeq" id="WP_011125924.1">
    <property type="nucleotide sequence ID" value="NC_005042.1"/>
</dbReference>
<dbReference type="SMR" id="Q7V9Q4"/>
<dbReference type="STRING" id="167539.Pro_1775"/>
<dbReference type="EnsemblBacteria" id="AAQ00819">
    <property type="protein sequence ID" value="AAQ00819"/>
    <property type="gene ID" value="Pro_1775"/>
</dbReference>
<dbReference type="KEGG" id="pma:Pro_1775"/>
<dbReference type="PATRIC" id="fig|167539.5.peg.1875"/>
<dbReference type="eggNOG" id="COG2255">
    <property type="taxonomic scope" value="Bacteria"/>
</dbReference>
<dbReference type="HOGENOM" id="CLU_055599_1_1_3"/>
<dbReference type="OrthoDB" id="9804478at2"/>
<dbReference type="Proteomes" id="UP000001420">
    <property type="component" value="Chromosome"/>
</dbReference>
<dbReference type="GO" id="GO:0005737">
    <property type="term" value="C:cytoplasm"/>
    <property type="evidence" value="ECO:0007669"/>
    <property type="project" value="UniProtKB-SubCell"/>
</dbReference>
<dbReference type="GO" id="GO:0048476">
    <property type="term" value="C:Holliday junction resolvase complex"/>
    <property type="evidence" value="ECO:0007669"/>
    <property type="project" value="UniProtKB-UniRule"/>
</dbReference>
<dbReference type="GO" id="GO:0005524">
    <property type="term" value="F:ATP binding"/>
    <property type="evidence" value="ECO:0007669"/>
    <property type="project" value="UniProtKB-UniRule"/>
</dbReference>
<dbReference type="GO" id="GO:0016887">
    <property type="term" value="F:ATP hydrolysis activity"/>
    <property type="evidence" value="ECO:0007669"/>
    <property type="project" value="InterPro"/>
</dbReference>
<dbReference type="GO" id="GO:0000400">
    <property type="term" value="F:four-way junction DNA binding"/>
    <property type="evidence" value="ECO:0007669"/>
    <property type="project" value="UniProtKB-UniRule"/>
</dbReference>
<dbReference type="GO" id="GO:0009378">
    <property type="term" value="F:four-way junction helicase activity"/>
    <property type="evidence" value="ECO:0007669"/>
    <property type="project" value="InterPro"/>
</dbReference>
<dbReference type="GO" id="GO:0006310">
    <property type="term" value="P:DNA recombination"/>
    <property type="evidence" value="ECO:0007669"/>
    <property type="project" value="UniProtKB-UniRule"/>
</dbReference>
<dbReference type="GO" id="GO:0006281">
    <property type="term" value="P:DNA repair"/>
    <property type="evidence" value="ECO:0007669"/>
    <property type="project" value="UniProtKB-UniRule"/>
</dbReference>
<dbReference type="CDD" id="cd00009">
    <property type="entry name" value="AAA"/>
    <property type="match status" value="1"/>
</dbReference>
<dbReference type="Gene3D" id="1.10.8.60">
    <property type="match status" value="1"/>
</dbReference>
<dbReference type="Gene3D" id="3.40.50.300">
    <property type="entry name" value="P-loop containing nucleotide triphosphate hydrolases"/>
    <property type="match status" value="1"/>
</dbReference>
<dbReference type="Gene3D" id="1.10.10.10">
    <property type="entry name" value="Winged helix-like DNA-binding domain superfamily/Winged helix DNA-binding domain"/>
    <property type="match status" value="1"/>
</dbReference>
<dbReference type="HAMAP" id="MF_00016">
    <property type="entry name" value="DNA_HJ_migration_RuvB"/>
    <property type="match status" value="1"/>
</dbReference>
<dbReference type="InterPro" id="IPR003593">
    <property type="entry name" value="AAA+_ATPase"/>
</dbReference>
<dbReference type="InterPro" id="IPR041445">
    <property type="entry name" value="AAA_lid_4"/>
</dbReference>
<dbReference type="InterPro" id="IPR004605">
    <property type="entry name" value="DNA_helicase_Holl-junc_RuvB"/>
</dbReference>
<dbReference type="InterPro" id="IPR027417">
    <property type="entry name" value="P-loop_NTPase"/>
</dbReference>
<dbReference type="InterPro" id="IPR008824">
    <property type="entry name" value="RuvB-like_N"/>
</dbReference>
<dbReference type="InterPro" id="IPR008823">
    <property type="entry name" value="RuvB_C"/>
</dbReference>
<dbReference type="InterPro" id="IPR036388">
    <property type="entry name" value="WH-like_DNA-bd_sf"/>
</dbReference>
<dbReference type="InterPro" id="IPR036390">
    <property type="entry name" value="WH_DNA-bd_sf"/>
</dbReference>
<dbReference type="NCBIfam" id="NF000868">
    <property type="entry name" value="PRK00080.1"/>
    <property type="match status" value="1"/>
</dbReference>
<dbReference type="NCBIfam" id="TIGR00635">
    <property type="entry name" value="ruvB"/>
    <property type="match status" value="1"/>
</dbReference>
<dbReference type="PANTHER" id="PTHR42848">
    <property type="match status" value="1"/>
</dbReference>
<dbReference type="PANTHER" id="PTHR42848:SF1">
    <property type="entry name" value="HOLLIDAY JUNCTION BRANCH MIGRATION COMPLEX SUBUNIT RUVB"/>
    <property type="match status" value="1"/>
</dbReference>
<dbReference type="Pfam" id="PF17864">
    <property type="entry name" value="AAA_lid_4"/>
    <property type="match status" value="1"/>
</dbReference>
<dbReference type="Pfam" id="PF05491">
    <property type="entry name" value="RuvB_C"/>
    <property type="match status" value="1"/>
</dbReference>
<dbReference type="Pfam" id="PF05496">
    <property type="entry name" value="RuvB_N"/>
    <property type="match status" value="1"/>
</dbReference>
<dbReference type="SMART" id="SM00382">
    <property type="entry name" value="AAA"/>
    <property type="match status" value="1"/>
</dbReference>
<dbReference type="SUPFAM" id="SSF52540">
    <property type="entry name" value="P-loop containing nucleoside triphosphate hydrolases"/>
    <property type="match status" value="1"/>
</dbReference>
<dbReference type="SUPFAM" id="SSF46785">
    <property type="entry name" value="Winged helix' DNA-binding domain"/>
    <property type="match status" value="1"/>
</dbReference>
<reference key="1">
    <citation type="journal article" date="2003" name="Proc. Natl. Acad. Sci. U.S.A.">
        <title>Genome sequence of the cyanobacterium Prochlorococcus marinus SS120, a nearly minimal oxyphototrophic genome.</title>
        <authorList>
            <person name="Dufresne A."/>
            <person name="Salanoubat M."/>
            <person name="Partensky F."/>
            <person name="Artiguenave F."/>
            <person name="Axmann I.M."/>
            <person name="Barbe V."/>
            <person name="Duprat S."/>
            <person name="Galperin M.Y."/>
            <person name="Koonin E.V."/>
            <person name="Le Gall F."/>
            <person name="Makarova K.S."/>
            <person name="Ostrowski M."/>
            <person name="Oztas S."/>
            <person name="Robert C."/>
            <person name="Rogozin I.B."/>
            <person name="Scanlan D.J."/>
            <person name="Tandeau de Marsac N."/>
            <person name="Weissenbach J."/>
            <person name="Wincker P."/>
            <person name="Wolf Y.I."/>
            <person name="Hess W.R."/>
        </authorList>
    </citation>
    <scope>NUCLEOTIDE SEQUENCE [LARGE SCALE GENOMIC DNA]</scope>
    <source>
        <strain>SARG / CCMP1375 / SS120</strain>
    </source>
</reference>
<protein>
    <recommendedName>
        <fullName evidence="1">Holliday junction branch migration complex subunit RuvB</fullName>
        <ecNumber evidence="1">3.6.4.-</ecNumber>
    </recommendedName>
</protein>
<gene>
    <name evidence="1" type="primary">ruvB</name>
    <name type="ordered locus">Pro_1775</name>
</gene>
<organism>
    <name type="scientific">Prochlorococcus marinus (strain SARG / CCMP1375 / SS120)</name>
    <dbReference type="NCBI Taxonomy" id="167539"/>
    <lineage>
        <taxon>Bacteria</taxon>
        <taxon>Bacillati</taxon>
        <taxon>Cyanobacteriota</taxon>
        <taxon>Cyanophyceae</taxon>
        <taxon>Synechococcales</taxon>
        <taxon>Prochlorococcaceae</taxon>
        <taxon>Prochlorococcus</taxon>
    </lineage>
</organism>
<sequence length="356" mass="39305">MAIVSSGFEKHSSSNLSRKTRLLDPTPSLEEGKVRKEDSLRPKCWDEFIGQSALKEVLGISVKAALSRKEALDHVLLYGPPGLGKTTMALVLGNELGVKCRITSAPALERPRDIIGLLLNLEPNELLFVDEIHRLSKVAEELLYPALEDFRIDLTVGKGTTARTREINLPRFTLVGATTKPASISSPLRDRFGITQRLNFYSISDLNRIIQRAADLFGLSLTGDAGLEIARRCRGTPRIANRLLRRVRDYATVQNQLKLVDKSLVDKSLTLHQVDECGLDQSDRRFLLFIIDVHNGGPVGLDTLAAALGEEAATLESVVEPFLLQIGFLKRTSRGRVITQAALEHLNSCKNSPIIK</sequence>
<evidence type="ECO:0000255" key="1">
    <source>
        <dbReference type="HAMAP-Rule" id="MF_00016"/>
    </source>
</evidence>
<evidence type="ECO:0000256" key="2">
    <source>
        <dbReference type="SAM" id="MobiDB-lite"/>
    </source>
</evidence>
<comment type="function">
    <text evidence="1">The RuvA-RuvB-RuvC complex processes Holliday junction (HJ) DNA during genetic recombination and DNA repair, while the RuvA-RuvB complex plays an important role in the rescue of blocked DNA replication forks via replication fork reversal (RFR). RuvA specifically binds to HJ cruciform DNA, conferring on it an open structure. The RuvB hexamer acts as an ATP-dependent pump, pulling dsDNA into and through the RuvAB complex. RuvB forms 2 homohexamers on either side of HJ DNA bound by 1 or 2 RuvA tetramers; 4 subunits per hexamer contact DNA at a time. Coordinated motions by a converter formed by DNA-disengaged RuvB subunits stimulates ATP hydrolysis and nucleotide exchange. Immobilization of the converter enables RuvB to convert the ATP-contained energy into a lever motion, pulling 2 nucleotides of DNA out of the RuvA tetramer per ATP hydrolyzed, thus driving DNA branch migration. The RuvB motors rotate together with the DNA substrate, which together with the progressing nucleotide cycle form the mechanistic basis for DNA recombination by continuous HJ branch migration. Branch migration allows RuvC to scan DNA until it finds its consensus sequence, where it cleaves and resolves cruciform DNA.</text>
</comment>
<comment type="catalytic activity">
    <reaction evidence="1">
        <text>ATP + H2O = ADP + phosphate + H(+)</text>
        <dbReference type="Rhea" id="RHEA:13065"/>
        <dbReference type="ChEBI" id="CHEBI:15377"/>
        <dbReference type="ChEBI" id="CHEBI:15378"/>
        <dbReference type="ChEBI" id="CHEBI:30616"/>
        <dbReference type="ChEBI" id="CHEBI:43474"/>
        <dbReference type="ChEBI" id="CHEBI:456216"/>
    </reaction>
</comment>
<comment type="subunit">
    <text evidence="1">Homohexamer. Forms an RuvA(8)-RuvB(12)-Holliday junction (HJ) complex. HJ DNA is sandwiched between 2 RuvA tetramers; dsDNA enters through RuvA and exits via RuvB. An RuvB hexamer assembles on each DNA strand where it exits the tetramer. Each RuvB hexamer is contacted by two RuvA subunits (via domain III) on 2 adjacent RuvB subunits; this complex drives branch migration. In the full resolvosome a probable DNA-RuvA(4)-RuvB(12)-RuvC(2) complex forms which resolves the HJ.</text>
</comment>
<comment type="subcellular location">
    <subcellularLocation>
        <location evidence="1">Cytoplasm</location>
    </subcellularLocation>
</comment>
<comment type="domain">
    <text evidence="1">Has 3 domains, the large (RuvB-L) and small ATPase (RuvB-S) domains and the C-terminal head (RuvB-H) domain. The head domain binds DNA, while the ATPase domains jointly bind ATP, ADP or are empty depending on the state of the subunit in the translocation cycle. During a single DNA translocation step the structure of each domain remains the same, but their relative positions change.</text>
</comment>
<comment type="similarity">
    <text evidence="1">Belongs to the RuvB family.</text>
</comment>
<name>RUVB_PROMA</name>
<feature type="chain" id="PRO_0000165575" description="Holliday junction branch migration complex subunit RuvB">
    <location>
        <begin position="1"/>
        <end position="356"/>
    </location>
</feature>
<feature type="region of interest" description="Large ATPase domain (RuvB-L)" evidence="1">
    <location>
        <begin position="13"/>
        <end position="201"/>
    </location>
</feature>
<feature type="region of interest" description="Disordered" evidence="2">
    <location>
        <begin position="15"/>
        <end position="35"/>
    </location>
</feature>
<feature type="region of interest" description="Small ATPAse domain (RuvB-S)" evidence="1">
    <location>
        <begin position="202"/>
        <end position="273"/>
    </location>
</feature>
<feature type="region of interest" description="Head domain (RuvB-H)" evidence="1">
    <location>
        <begin position="276"/>
        <end position="356"/>
    </location>
</feature>
<feature type="binding site" evidence="1">
    <location>
        <position position="40"/>
    </location>
    <ligand>
        <name>ATP</name>
        <dbReference type="ChEBI" id="CHEBI:30616"/>
    </ligand>
</feature>
<feature type="binding site" evidence="1">
    <location>
        <position position="41"/>
    </location>
    <ligand>
        <name>ATP</name>
        <dbReference type="ChEBI" id="CHEBI:30616"/>
    </ligand>
</feature>
<feature type="binding site" evidence="1">
    <location>
        <position position="82"/>
    </location>
    <ligand>
        <name>ATP</name>
        <dbReference type="ChEBI" id="CHEBI:30616"/>
    </ligand>
</feature>
<feature type="binding site" evidence="1">
    <location>
        <position position="85"/>
    </location>
    <ligand>
        <name>ATP</name>
        <dbReference type="ChEBI" id="CHEBI:30616"/>
    </ligand>
</feature>
<feature type="binding site" evidence="1">
    <location>
        <position position="86"/>
    </location>
    <ligand>
        <name>ATP</name>
        <dbReference type="ChEBI" id="CHEBI:30616"/>
    </ligand>
</feature>
<feature type="binding site" evidence="1">
    <location>
        <position position="86"/>
    </location>
    <ligand>
        <name>Mg(2+)</name>
        <dbReference type="ChEBI" id="CHEBI:18420"/>
    </ligand>
</feature>
<feature type="binding site" evidence="1">
    <location>
        <position position="87"/>
    </location>
    <ligand>
        <name>ATP</name>
        <dbReference type="ChEBI" id="CHEBI:30616"/>
    </ligand>
</feature>
<feature type="binding site" evidence="1">
    <location>
        <begin position="148"/>
        <end position="150"/>
    </location>
    <ligand>
        <name>ATP</name>
        <dbReference type="ChEBI" id="CHEBI:30616"/>
    </ligand>
</feature>
<feature type="binding site" evidence="1">
    <location>
        <position position="191"/>
    </location>
    <ligand>
        <name>ATP</name>
        <dbReference type="ChEBI" id="CHEBI:30616"/>
    </ligand>
</feature>
<feature type="binding site" evidence="1">
    <location>
        <position position="201"/>
    </location>
    <ligand>
        <name>ATP</name>
        <dbReference type="ChEBI" id="CHEBI:30616"/>
    </ligand>
</feature>
<feature type="binding site" evidence="1">
    <location>
        <position position="238"/>
    </location>
    <ligand>
        <name>ATP</name>
        <dbReference type="ChEBI" id="CHEBI:30616"/>
    </ligand>
</feature>
<feature type="binding site" evidence="1">
    <location>
        <position position="331"/>
    </location>
    <ligand>
        <name>DNA</name>
        <dbReference type="ChEBI" id="CHEBI:16991"/>
    </ligand>
</feature>
<feature type="binding site" evidence="1">
    <location>
        <position position="336"/>
    </location>
    <ligand>
        <name>DNA</name>
        <dbReference type="ChEBI" id="CHEBI:16991"/>
    </ligand>
</feature>
<accession>Q7V9Q4</accession>